<protein>
    <recommendedName>
        <fullName>U8-theraphotoxin-Hhn1e</fullName>
        <shortName>U8-TRTX-Hhn1e</shortName>
    </recommendedName>
    <alternativeName>
        <fullName evidence="5">Hainantoxin-XIV-6</fullName>
        <shortName evidence="5">HNTX-XIV-6</shortName>
    </alternativeName>
</protein>
<proteinExistence type="evidence at transcript level"/>
<organism>
    <name type="scientific">Cyriopagopus hainanus</name>
    <name type="common">Chinese bird spider</name>
    <name type="synonym">Haplopelma hainanum</name>
    <dbReference type="NCBI Taxonomy" id="209901"/>
    <lineage>
        <taxon>Eukaryota</taxon>
        <taxon>Metazoa</taxon>
        <taxon>Ecdysozoa</taxon>
        <taxon>Arthropoda</taxon>
        <taxon>Chelicerata</taxon>
        <taxon>Arachnida</taxon>
        <taxon>Araneae</taxon>
        <taxon>Mygalomorphae</taxon>
        <taxon>Theraphosidae</taxon>
        <taxon>Haplopelma</taxon>
    </lineage>
</organism>
<sequence>MKVVLLVCLVWMMAMMELVSCECWSQADCSGGHCCAGSSFSKNCRPYGGDGEQCEPRNKYEVYSRGCPCEENLMCSVINRCQSA</sequence>
<name>H14F1_CYRHA</name>
<keyword id="KW-1015">Disulfide bond</keyword>
<keyword id="KW-0964">Secreted</keyword>
<keyword id="KW-0732">Signal</keyword>
<keyword id="KW-0800">Toxin</keyword>
<feature type="signal peptide" evidence="3">
    <location>
        <begin position="1"/>
        <end position="21"/>
    </location>
</feature>
<feature type="chain" id="PRO_0000400853" description="U8-theraphotoxin-Hhn1e">
    <location>
        <begin position="22"/>
        <end position="84"/>
    </location>
</feature>
<feature type="disulfide bond" evidence="2">
    <location>
        <begin position="23"/>
        <end position="35"/>
    </location>
</feature>
<feature type="disulfide bond" evidence="2">
    <location>
        <begin position="29"/>
        <end position="44"/>
    </location>
</feature>
<feature type="disulfide bond" evidence="2">
    <location>
        <begin position="34"/>
        <end position="67"/>
    </location>
</feature>
<feature type="disulfide bond" evidence="2">
    <location>
        <begin position="54"/>
        <end position="75"/>
    </location>
</feature>
<feature type="disulfide bond" evidence="2">
    <location>
        <begin position="69"/>
        <end position="81"/>
    </location>
</feature>
<reference key="1">
    <citation type="journal article" date="2010" name="J. Proteome Res.">
        <title>Molecular diversification of peptide toxins from the tarantula Haplopelma hainanum (Ornithoctonus hainana) venom based on transcriptomic, peptidomic, and genomic analyses.</title>
        <authorList>
            <person name="Tang X."/>
            <person name="Zhang Y."/>
            <person name="Hu W."/>
            <person name="Xu D."/>
            <person name="Tao H."/>
            <person name="Yang X."/>
            <person name="Li Y."/>
            <person name="Jiang L."/>
            <person name="Liang S."/>
        </authorList>
    </citation>
    <scope>NUCLEOTIDE SEQUENCE [LARGE SCALE MRNA]</scope>
    <source>
        <tissue>Venom gland</tissue>
    </source>
</reference>
<comment type="subcellular location">
    <subcellularLocation>
        <location evidence="1">Secreted</location>
    </subcellularLocation>
</comment>
<comment type="tissue specificity">
    <text>Expressed by the venom gland.</text>
</comment>
<comment type="similarity">
    <text evidence="4">Belongs to the AVIT (prokineticin) family.</text>
</comment>
<dbReference type="EMBL" id="GU293022">
    <property type="protein sequence ID" value="ADB56838.1"/>
    <property type="molecule type" value="mRNA"/>
</dbReference>
<dbReference type="SMR" id="D2Y2E5"/>
<dbReference type="ArachnoServer" id="AS001879">
    <property type="toxin name" value="U8-theraphotoxin-Hhn1e"/>
</dbReference>
<dbReference type="GO" id="GO:0005576">
    <property type="term" value="C:extracellular region"/>
    <property type="evidence" value="ECO:0007669"/>
    <property type="project" value="UniProtKB-SubCell"/>
</dbReference>
<dbReference type="GO" id="GO:0090729">
    <property type="term" value="F:toxin activity"/>
    <property type="evidence" value="ECO:0007669"/>
    <property type="project" value="UniProtKB-KW"/>
</dbReference>
<dbReference type="Gene3D" id="2.10.80.10">
    <property type="entry name" value="Lipase, subunit A"/>
    <property type="match status" value="1"/>
</dbReference>
<dbReference type="InterPro" id="IPR023569">
    <property type="entry name" value="Prokineticin_domain"/>
</dbReference>
<dbReference type="Pfam" id="PF06607">
    <property type="entry name" value="Prokineticin"/>
    <property type="match status" value="1"/>
</dbReference>
<evidence type="ECO:0000250" key="1"/>
<evidence type="ECO:0000250" key="2">
    <source>
        <dbReference type="UniProtKB" id="Q9PW66"/>
    </source>
</evidence>
<evidence type="ECO:0000255" key="3"/>
<evidence type="ECO:0000305" key="4"/>
<evidence type="ECO:0000312" key="5">
    <source>
        <dbReference type="EMBL" id="ADB56838.1"/>
    </source>
</evidence>
<accession>D2Y2E5</accession>